<feature type="chain" id="PRO_0000413953" description="Zinc metalloproteinase-disintegrin-like leucurogin">
    <location>
        <begin position="1" status="less than"/>
        <end position="93" status="greater than"/>
    </location>
</feature>
<feature type="domain" description="Disintegrin" evidence="4">
    <location>
        <begin position="8"/>
        <end position="93" status="greater than"/>
    </location>
</feature>
<feature type="region of interest" description="Disordered" evidence="5">
    <location>
        <begin position="74"/>
        <end position="93"/>
    </location>
</feature>
<feature type="short sequence motif" description="D/ECD-tripeptide">
    <location>
        <begin position="72"/>
        <end position="74"/>
    </location>
</feature>
<feature type="binding site" evidence="3">
    <location>
        <position position="10"/>
    </location>
    <ligand>
        <name>Ca(2+)</name>
        <dbReference type="ChEBI" id="CHEBI:29108"/>
        <label>1</label>
    </ligand>
</feature>
<feature type="binding site" evidence="3">
    <location>
        <position position="13"/>
    </location>
    <ligand>
        <name>Ca(2+)</name>
        <dbReference type="ChEBI" id="CHEBI:29108"/>
        <label>1</label>
    </ligand>
</feature>
<feature type="binding site" evidence="3">
    <location>
        <position position="15"/>
    </location>
    <ligand>
        <name>Ca(2+)</name>
        <dbReference type="ChEBI" id="CHEBI:29108"/>
        <label>1</label>
    </ligand>
</feature>
<feature type="binding site" evidence="3">
    <location>
        <position position="17"/>
    </location>
    <ligand>
        <name>Ca(2+)</name>
        <dbReference type="ChEBI" id="CHEBI:29108"/>
        <label>1</label>
    </ligand>
</feature>
<feature type="binding site" evidence="3">
    <location>
        <position position="20"/>
    </location>
    <ligand>
        <name>Ca(2+)</name>
        <dbReference type="ChEBI" id="CHEBI:29108"/>
        <label>1</label>
    </ligand>
</feature>
<feature type="binding site" evidence="3">
    <location>
        <position position="23"/>
    </location>
    <ligand>
        <name>Ca(2+)</name>
        <dbReference type="ChEBI" id="CHEBI:29108"/>
        <label>1</label>
    </ligand>
</feature>
<feature type="binding site" evidence="3">
    <location>
        <position position="74"/>
    </location>
    <ligand>
        <name>Ca(2+)</name>
        <dbReference type="ChEBI" id="CHEBI:29108"/>
        <label>2</label>
    </ligand>
</feature>
<feature type="binding site" evidence="3">
    <location>
        <position position="75"/>
    </location>
    <ligand>
        <name>Ca(2+)</name>
        <dbReference type="ChEBI" id="CHEBI:29108"/>
        <label>2</label>
    </ligand>
</feature>
<feature type="binding site" evidence="3">
    <location>
        <position position="77"/>
    </location>
    <ligand>
        <name>Ca(2+)</name>
        <dbReference type="ChEBI" id="CHEBI:29108"/>
        <label>2</label>
    </ligand>
</feature>
<feature type="binding site" evidence="3">
    <location>
        <position position="89"/>
    </location>
    <ligand>
        <name>Ca(2+)</name>
        <dbReference type="ChEBI" id="CHEBI:29108"/>
        <label>2</label>
    </ligand>
</feature>
<feature type="binding site" evidence="3">
    <location>
        <position position="90"/>
    </location>
    <ligand>
        <name>Ca(2+)</name>
        <dbReference type="ChEBI" id="CHEBI:29108"/>
        <label>2</label>
    </ligand>
</feature>
<feature type="disulfide bond" evidence="4">
    <location>
        <begin position="11"/>
        <end position="40"/>
    </location>
</feature>
<feature type="disulfide bond" evidence="4">
    <location>
        <begin position="22"/>
        <end position="35"/>
    </location>
</feature>
<feature type="disulfide bond" evidence="4">
    <location>
        <begin position="24"/>
        <end position="30"/>
    </location>
</feature>
<feature type="disulfide bond" evidence="4">
    <location>
        <begin position="34"/>
        <end position="57"/>
    </location>
</feature>
<feature type="disulfide bond" evidence="4">
    <location>
        <begin position="48"/>
        <end position="54"/>
    </location>
</feature>
<feature type="disulfide bond" evidence="4">
    <location>
        <begin position="53"/>
        <end position="79"/>
    </location>
</feature>
<feature type="disulfide bond" evidence="4">
    <location>
        <begin position="66"/>
        <end position="86"/>
    </location>
</feature>
<feature type="non-terminal residue">
    <location>
        <position position="1"/>
    </location>
</feature>
<feature type="non-terminal residue">
    <location>
        <position position="93"/>
    </location>
</feature>
<proteinExistence type="evidence at transcript level"/>
<dbReference type="EC" id="3.4.24.-" evidence="9"/>
<dbReference type="SMR" id="P0DJ87"/>
<dbReference type="GO" id="GO:0005576">
    <property type="term" value="C:extracellular region"/>
    <property type="evidence" value="ECO:0007669"/>
    <property type="project" value="UniProtKB-SubCell"/>
</dbReference>
<dbReference type="GO" id="GO:0005886">
    <property type="term" value="C:plasma membrane"/>
    <property type="evidence" value="ECO:0007669"/>
    <property type="project" value="TreeGrafter"/>
</dbReference>
<dbReference type="GO" id="GO:0046872">
    <property type="term" value="F:metal ion binding"/>
    <property type="evidence" value="ECO:0007669"/>
    <property type="project" value="UniProtKB-KW"/>
</dbReference>
<dbReference type="GO" id="GO:0008237">
    <property type="term" value="F:metallopeptidase activity"/>
    <property type="evidence" value="ECO:0007669"/>
    <property type="project" value="UniProtKB-KW"/>
</dbReference>
<dbReference type="GO" id="GO:0090729">
    <property type="term" value="F:toxin activity"/>
    <property type="evidence" value="ECO:0007669"/>
    <property type="project" value="UniProtKB-KW"/>
</dbReference>
<dbReference type="GO" id="GO:0006508">
    <property type="term" value="P:proteolysis"/>
    <property type="evidence" value="ECO:0007669"/>
    <property type="project" value="UniProtKB-KW"/>
</dbReference>
<dbReference type="FunFam" id="4.10.70.10:FF:000001">
    <property type="entry name" value="Disintegrin and metalloproteinase domain-containing protein 22"/>
    <property type="match status" value="1"/>
</dbReference>
<dbReference type="Gene3D" id="4.10.70.10">
    <property type="entry name" value="Disintegrin domain"/>
    <property type="match status" value="1"/>
</dbReference>
<dbReference type="InterPro" id="IPR018358">
    <property type="entry name" value="Disintegrin_CS"/>
</dbReference>
<dbReference type="InterPro" id="IPR001762">
    <property type="entry name" value="Disintegrin_dom"/>
</dbReference>
<dbReference type="InterPro" id="IPR036436">
    <property type="entry name" value="Disintegrin_dom_sf"/>
</dbReference>
<dbReference type="PANTHER" id="PTHR11905">
    <property type="entry name" value="ADAM A DISINTEGRIN AND METALLOPROTEASE DOMAIN"/>
    <property type="match status" value="1"/>
</dbReference>
<dbReference type="PANTHER" id="PTHR11905:SF32">
    <property type="entry name" value="DISINTEGRIN AND METALLOPROTEINASE DOMAIN-CONTAINING PROTEIN 28"/>
    <property type="match status" value="1"/>
</dbReference>
<dbReference type="Pfam" id="PF00200">
    <property type="entry name" value="Disintegrin"/>
    <property type="match status" value="1"/>
</dbReference>
<dbReference type="PRINTS" id="PR00289">
    <property type="entry name" value="DISINTEGRIN"/>
</dbReference>
<dbReference type="SMART" id="SM00050">
    <property type="entry name" value="DISIN"/>
    <property type="match status" value="1"/>
</dbReference>
<dbReference type="SUPFAM" id="SSF57552">
    <property type="entry name" value="Blood coagulation inhibitor (disintegrin)"/>
    <property type="match status" value="1"/>
</dbReference>
<dbReference type="PROSITE" id="PS00427">
    <property type="entry name" value="DISINTEGRIN_1"/>
    <property type="match status" value="1"/>
</dbReference>
<dbReference type="PROSITE" id="PS50214">
    <property type="entry name" value="DISINTEGRIN_2"/>
    <property type="match status" value="1"/>
</dbReference>
<sequence>LGTDIISPPVCGNELLEVGEECDCGTPENCQNECCDAATCKLKSGSECGHGDCCEQCKFTKSGTECRASMSECDPAEHCTGQSSECPADVGHK</sequence>
<comment type="function">
    <text evidence="2 6 7">Snake venom zinc metalloprotease that possesses hemorrhagic activity (By similarity). The disintegrin-like domain has been expressed and named leucurogin (PubMed:21641921). This recombinant disintegrin is able to inhibit collagen-induced platelet aggregation but not ADP- or arachidonic acid-induced platelet aggregation (PubMed:21641921). Furthermore, it inhibits the adhesion of human fibroblasts to collagen type I (PubMed:30611825). It also reduces adhesion and migration of human fibroblasts and inhibits migration and proliferation of human and mouse melanoma cell lines (BLM, and B16-F10-Nex2) (PubMed:30611825). In vitro, it inhibits the vascular structures formation by endothelial cells (PubMed:30611825). In addition, it inhibits the growth of experimental Ehrlich tumor and has anti-angiogenesis effect on the sponge implant model (PubMed:21641921). In vivo, when intraperitoneally injected into mice, it inhibits lung metastasis of B16F10 Nex-2 cells. In the treatment of human melanoma, grafted intradermally in the nude mice flank, it inhibits tumor growth (PubMed:21641921).</text>
</comment>
<comment type="cofactor">
    <cofactor evidence="1">
        <name>Zn(2+)</name>
        <dbReference type="ChEBI" id="CHEBI:29105"/>
    </cofactor>
    <text evidence="1">Binds 1 zinc ion per subunit.</text>
</comment>
<comment type="subunit">
    <text evidence="1">Monomer.</text>
</comment>
<comment type="subcellular location">
    <subcellularLocation>
        <location evidence="10">Secreted</location>
    </subcellularLocation>
</comment>
<comment type="tissue specificity">
    <text evidence="10">Expressed by the venom gland.</text>
</comment>
<comment type="PTM">
    <text evidence="3">N-glycosylated.</text>
</comment>
<comment type="biotechnology">
    <text evidence="11">This disintegrin-like domain, or derivatives can be considered as possible nextgeneration drugs for treatment of melanoma.</text>
</comment>
<comment type="similarity">
    <text evidence="9">Belongs to the venom metalloproteinase (M12B) family. P-III subfamily.</text>
</comment>
<accession>P0DJ87</accession>
<keyword id="KW-0106">Calcium</keyword>
<keyword id="KW-1015">Disulfide bond</keyword>
<keyword id="KW-0325">Glycoprotein</keyword>
<keyword id="KW-1199">Hemostasis impairing toxin</keyword>
<keyword id="KW-0378">Hydrolase</keyword>
<keyword id="KW-0479">Metal-binding</keyword>
<keyword id="KW-0482">Metalloprotease</keyword>
<keyword id="KW-1201">Platelet aggregation inhibiting toxin</keyword>
<keyword id="KW-0645">Protease</keyword>
<keyword id="KW-0964">Secreted</keyword>
<keyword id="KW-0800">Toxin</keyword>
<keyword id="KW-0862">Zinc</keyword>
<reference key="1">
    <citation type="journal article" date="2011" name="Toxicon">
        <title>Leucurogin, a new recombinant disintegrin cloned from Bothrops leucurus (white-tailed-jararaca) with potent activity upon platelet aggregation and tumor growth.</title>
        <authorList>
            <person name="Higuchi D.A."/>
            <person name="Almeida M.C."/>
            <person name="Barros C.C."/>
            <person name="Sanchez E.F."/>
            <person name="Pesquero P.R."/>
            <person name="Lang E.A."/>
            <person name="Samaan M."/>
            <person name="Araujo R.C."/>
            <person name="Pesquero J.B."/>
            <person name="Pesquero J.L."/>
        </authorList>
    </citation>
    <scope>NUCLEOTIDE SEQUENCE [MRNA]</scope>
    <scope>FUNCTION</scope>
    <scope>RECOMBINANT EXPRESSION</scope>
    <source>
        <tissue>Venom gland</tissue>
    </source>
</reference>
<reference key="2">
    <citation type="journal article" date="2019" name="Toxicon">
        <title>Leucurogin and melanoma therapy.</title>
        <authorList>
            <person name="Almeida M.C."/>
            <person name="Santos I.C."/>
            <person name="Paschoalin T."/>
            <person name="Travassos L.R."/>
            <person name="Mauch C."/>
            <person name="Zigrino P."/>
            <person name="Pesquero J.B."/>
            <person name="Pesquero J.L."/>
            <person name="Higuchi D.A."/>
        </authorList>
    </citation>
    <scope>FUNCTION</scope>
    <scope>RECOMBINANT EXPRESSION</scope>
    <scope>BIOTECHNOLOGY</scope>
</reference>
<name>VM3L_BOTLC</name>
<evidence type="ECO:0000250" key="1"/>
<evidence type="ECO:0000250" key="2">
    <source>
        <dbReference type="UniProtKB" id="P30431"/>
    </source>
</evidence>
<evidence type="ECO:0000250" key="3">
    <source>
        <dbReference type="UniProtKB" id="Q90282"/>
    </source>
</evidence>
<evidence type="ECO:0000255" key="4">
    <source>
        <dbReference type="PROSITE-ProRule" id="PRU00068"/>
    </source>
</evidence>
<evidence type="ECO:0000256" key="5">
    <source>
        <dbReference type="SAM" id="MobiDB-lite"/>
    </source>
</evidence>
<evidence type="ECO:0000269" key="6">
    <source>
    </source>
</evidence>
<evidence type="ECO:0000269" key="7">
    <source>
    </source>
</evidence>
<evidence type="ECO:0000303" key="8">
    <source>
    </source>
</evidence>
<evidence type="ECO:0000305" key="9"/>
<evidence type="ECO:0000305" key="10">
    <source>
    </source>
</evidence>
<evidence type="ECO:0000305" key="11">
    <source>
    </source>
</evidence>
<organism>
    <name type="scientific">Bothrops leucurus</name>
    <name type="common">Whitetail lancehead</name>
    <dbReference type="NCBI Taxonomy" id="157295"/>
    <lineage>
        <taxon>Eukaryota</taxon>
        <taxon>Metazoa</taxon>
        <taxon>Chordata</taxon>
        <taxon>Craniata</taxon>
        <taxon>Vertebrata</taxon>
        <taxon>Euteleostomi</taxon>
        <taxon>Lepidosauria</taxon>
        <taxon>Squamata</taxon>
        <taxon>Bifurcata</taxon>
        <taxon>Unidentata</taxon>
        <taxon>Episquamata</taxon>
        <taxon>Toxicofera</taxon>
        <taxon>Serpentes</taxon>
        <taxon>Colubroidea</taxon>
        <taxon>Viperidae</taxon>
        <taxon>Crotalinae</taxon>
        <taxon>Bothrops</taxon>
    </lineage>
</organism>
<protein>
    <recommendedName>
        <fullName evidence="8">Zinc metalloproteinase-disintegrin-like leucurogin</fullName>
        <ecNumber evidence="9">3.4.24.-</ecNumber>
    </recommendedName>
    <alternativeName>
        <fullName evidence="9">Snake venom metalloproteinase</fullName>
        <shortName evidence="9">SVMP</shortName>
    </alternativeName>
</protein>